<comment type="function">
    <text evidence="1">Produces ATP from ADP in the presence of a proton gradient across the membrane.</text>
</comment>
<comment type="subunit">
    <text>F-type ATPases have 2 components, CF(1) - the catalytic core - and CF(0) - the membrane proton channel. CF(1) has five subunits: alpha(3), beta(3), gamma(1), delta(1), epsilon(1). CF(0) has three main subunits: a, b and c.</text>
</comment>
<comment type="subcellular location">
    <subcellularLocation>
        <location evidence="1">Cell inner membrane</location>
        <topology evidence="1">Peripheral membrane protein</topology>
    </subcellularLocation>
</comment>
<comment type="similarity">
    <text evidence="2">Belongs to the ATPase epsilon chain family.</text>
</comment>
<proteinExistence type="inferred from homology"/>
<sequence length="139" mass="15068">MAMTYHLDVVSAEQQMFSGLVEKIQVTGSEGELGIYPGHAPLLTAIKPGMIRIVKQHGHEEFIYLSGGILEVQPGNVTVLADTAIRGQDLDEARAMEAKRKAEEHISSSHGDVDYAQASAELAKAIAQLRVIELTKKAM</sequence>
<accession>P0A6E7</accession>
<accession>P00832</accession>
<feature type="initiator methionine" description="Removed" evidence="1">
    <location>
        <position position="1"/>
    </location>
</feature>
<feature type="chain" id="PRO_0000188134" description="ATP synthase epsilon chain">
    <location>
        <begin position="2"/>
        <end position="139"/>
    </location>
</feature>
<organism>
    <name type="scientific">Escherichia coli O6:H1 (strain CFT073 / ATCC 700928 / UPEC)</name>
    <dbReference type="NCBI Taxonomy" id="199310"/>
    <lineage>
        <taxon>Bacteria</taxon>
        <taxon>Pseudomonadati</taxon>
        <taxon>Pseudomonadota</taxon>
        <taxon>Gammaproteobacteria</taxon>
        <taxon>Enterobacterales</taxon>
        <taxon>Enterobacteriaceae</taxon>
        <taxon>Escherichia</taxon>
    </lineage>
</organism>
<dbReference type="EMBL" id="AE014075">
    <property type="protein sequence ID" value="AAN83089.1"/>
    <property type="molecule type" value="Genomic_DNA"/>
</dbReference>
<dbReference type="RefSeq" id="WP_001251965.1">
    <property type="nucleotide sequence ID" value="NZ_CP051263.1"/>
</dbReference>
<dbReference type="SMR" id="P0A6E7"/>
<dbReference type="MINT" id="P0A6E7"/>
<dbReference type="STRING" id="199310.c4657"/>
<dbReference type="KEGG" id="ecc:c4657"/>
<dbReference type="eggNOG" id="COG0355">
    <property type="taxonomic scope" value="Bacteria"/>
</dbReference>
<dbReference type="HOGENOM" id="CLU_084338_2_0_6"/>
<dbReference type="BioCyc" id="ECOL199310:C4657-MONOMER"/>
<dbReference type="Proteomes" id="UP000001410">
    <property type="component" value="Chromosome"/>
</dbReference>
<dbReference type="GO" id="GO:0005886">
    <property type="term" value="C:plasma membrane"/>
    <property type="evidence" value="ECO:0007669"/>
    <property type="project" value="UniProtKB-SubCell"/>
</dbReference>
<dbReference type="GO" id="GO:0045259">
    <property type="term" value="C:proton-transporting ATP synthase complex"/>
    <property type="evidence" value="ECO:0007669"/>
    <property type="project" value="UniProtKB-KW"/>
</dbReference>
<dbReference type="GO" id="GO:0005524">
    <property type="term" value="F:ATP binding"/>
    <property type="evidence" value="ECO:0007669"/>
    <property type="project" value="UniProtKB-UniRule"/>
</dbReference>
<dbReference type="GO" id="GO:0046933">
    <property type="term" value="F:proton-transporting ATP synthase activity, rotational mechanism"/>
    <property type="evidence" value="ECO:0007669"/>
    <property type="project" value="UniProtKB-UniRule"/>
</dbReference>
<dbReference type="CDD" id="cd12152">
    <property type="entry name" value="F1-ATPase_delta"/>
    <property type="match status" value="1"/>
</dbReference>
<dbReference type="FunFam" id="1.20.5.440:FF:000001">
    <property type="entry name" value="ATP synthase epsilon chain"/>
    <property type="match status" value="1"/>
</dbReference>
<dbReference type="FunFam" id="2.60.15.10:FF:000001">
    <property type="entry name" value="ATP synthase epsilon chain"/>
    <property type="match status" value="1"/>
</dbReference>
<dbReference type="Gene3D" id="1.20.5.440">
    <property type="entry name" value="ATP synthase delta/epsilon subunit, C-terminal domain"/>
    <property type="match status" value="1"/>
</dbReference>
<dbReference type="Gene3D" id="2.60.15.10">
    <property type="entry name" value="F0F1 ATP synthase delta/epsilon subunit, N-terminal"/>
    <property type="match status" value="1"/>
</dbReference>
<dbReference type="HAMAP" id="MF_00530">
    <property type="entry name" value="ATP_synth_epsil_bac"/>
    <property type="match status" value="1"/>
</dbReference>
<dbReference type="InterPro" id="IPR036794">
    <property type="entry name" value="ATP_F1_dsu/esu_C_sf"/>
</dbReference>
<dbReference type="InterPro" id="IPR001469">
    <property type="entry name" value="ATP_synth_F1_dsu/esu"/>
</dbReference>
<dbReference type="InterPro" id="IPR020546">
    <property type="entry name" value="ATP_synth_F1_dsu/esu_N"/>
</dbReference>
<dbReference type="InterPro" id="IPR020547">
    <property type="entry name" value="ATP_synth_F1_esu_C"/>
</dbReference>
<dbReference type="InterPro" id="IPR036771">
    <property type="entry name" value="ATPsynth_dsu/esu_N"/>
</dbReference>
<dbReference type="NCBIfam" id="TIGR01216">
    <property type="entry name" value="ATP_synt_epsi"/>
    <property type="match status" value="1"/>
</dbReference>
<dbReference type="NCBIfam" id="NF001847">
    <property type="entry name" value="PRK00571.1-4"/>
    <property type="match status" value="1"/>
</dbReference>
<dbReference type="PANTHER" id="PTHR13822">
    <property type="entry name" value="ATP SYNTHASE DELTA/EPSILON CHAIN"/>
    <property type="match status" value="1"/>
</dbReference>
<dbReference type="PANTHER" id="PTHR13822:SF10">
    <property type="entry name" value="ATP SYNTHASE EPSILON CHAIN, CHLOROPLASTIC"/>
    <property type="match status" value="1"/>
</dbReference>
<dbReference type="Pfam" id="PF00401">
    <property type="entry name" value="ATP-synt_DE"/>
    <property type="match status" value="1"/>
</dbReference>
<dbReference type="Pfam" id="PF02823">
    <property type="entry name" value="ATP-synt_DE_N"/>
    <property type="match status" value="1"/>
</dbReference>
<dbReference type="SUPFAM" id="SSF46604">
    <property type="entry name" value="Epsilon subunit of F1F0-ATP synthase C-terminal domain"/>
    <property type="match status" value="1"/>
</dbReference>
<dbReference type="SUPFAM" id="SSF51344">
    <property type="entry name" value="Epsilon subunit of F1F0-ATP synthase N-terminal domain"/>
    <property type="match status" value="1"/>
</dbReference>
<protein>
    <recommendedName>
        <fullName>ATP synthase epsilon chain</fullName>
    </recommendedName>
    <alternativeName>
        <fullName>ATP synthase F1 sector epsilon subunit</fullName>
    </alternativeName>
    <alternativeName>
        <fullName>F-ATPase epsilon subunit</fullName>
    </alternativeName>
</protein>
<name>ATPE_ECOL6</name>
<evidence type="ECO:0000250" key="1"/>
<evidence type="ECO:0000305" key="2"/>
<keyword id="KW-0066">ATP synthesis</keyword>
<keyword id="KW-0997">Cell inner membrane</keyword>
<keyword id="KW-1003">Cell membrane</keyword>
<keyword id="KW-0139">CF(1)</keyword>
<keyword id="KW-0375">Hydrogen ion transport</keyword>
<keyword id="KW-0406">Ion transport</keyword>
<keyword id="KW-0472">Membrane</keyword>
<keyword id="KW-1185">Reference proteome</keyword>
<keyword id="KW-0813">Transport</keyword>
<reference key="1">
    <citation type="journal article" date="2002" name="Proc. Natl. Acad. Sci. U.S.A.">
        <title>Extensive mosaic structure revealed by the complete genome sequence of uropathogenic Escherichia coli.</title>
        <authorList>
            <person name="Welch R.A."/>
            <person name="Burland V."/>
            <person name="Plunkett G. III"/>
            <person name="Redford P."/>
            <person name="Roesch P."/>
            <person name="Rasko D."/>
            <person name="Buckles E.L."/>
            <person name="Liou S.-R."/>
            <person name="Boutin A."/>
            <person name="Hackett J."/>
            <person name="Stroud D."/>
            <person name="Mayhew G.F."/>
            <person name="Rose D.J."/>
            <person name="Zhou S."/>
            <person name="Schwartz D.C."/>
            <person name="Perna N.T."/>
            <person name="Mobley H.L.T."/>
            <person name="Donnenberg M.S."/>
            <person name="Blattner F.R."/>
        </authorList>
    </citation>
    <scope>NUCLEOTIDE SEQUENCE [LARGE SCALE GENOMIC DNA]</scope>
    <source>
        <strain>CFT073 / ATCC 700928 / UPEC</strain>
    </source>
</reference>
<gene>
    <name type="primary">atpC</name>
    <name type="synonym">papG</name>
    <name type="synonym">uncC</name>
    <name type="ordered locus">c4657</name>
</gene>